<feature type="chain" id="PRO_1000021806" description="Homoserine O-acetyltransferase">
    <location>
        <begin position="1"/>
        <end position="293"/>
    </location>
</feature>
<feature type="active site" description="Acyl-thioester intermediate" evidence="1">
    <location>
        <position position="141"/>
    </location>
</feature>
<feature type="active site" description="Proton acceptor" evidence="1">
    <location>
        <position position="234"/>
    </location>
</feature>
<feature type="active site" evidence="1">
    <location>
        <position position="236"/>
    </location>
</feature>
<feature type="binding site" evidence="1">
    <location>
        <position position="162"/>
    </location>
    <ligand>
        <name>substrate</name>
    </ligand>
</feature>
<feature type="binding site" evidence="1">
    <location>
        <position position="190"/>
    </location>
    <ligand>
        <name>substrate</name>
    </ligand>
</feature>
<feature type="binding site" evidence="1">
    <location>
        <position position="248"/>
    </location>
    <ligand>
        <name>substrate</name>
    </ligand>
</feature>
<feature type="site" description="Important for acyl-CoA specificity" evidence="1">
    <location>
        <position position="110"/>
    </location>
</feature>
<feature type="site" description="Important for substrate specificity" evidence="1">
    <location>
        <position position="190"/>
    </location>
</feature>
<reference key="1">
    <citation type="journal article" date="2005" name="PLoS Biol.">
        <title>Major structural differences and novel potential virulence mechanisms from the genomes of multiple Campylobacter species.</title>
        <authorList>
            <person name="Fouts D.E."/>
            <person name="Mongodin E.F."/>
            <person name="Mandrell R.E."/>
            <person name="Miller W.G."/>
            <person name="Rasko D.A."/>
            <person name="Ravel J."/>
            <person name="Brinkac L.M."/>
            <person name="DeBoy R.T."/>
            <person name="Parker C.T."/>
            <person name="Daugherty S.C."/>
            <person name="Dodson R.J."/>
            <person name="Durkin A.S."/>
            <person name="Madupu R."/>
            <person name="Sullivan S.A."/>
            <person name="Shetty J.U."/>
            <person name="Ayodeji M.A."/>
            <person name="Shvartsbeyn A."/>
            <person name="Schatz M.C."/>
            <person name="Badger J.H."/>
            <person name="Fraser C.M."/>
            <person name="Nelson K.E."/>
        </authorList>
    </citation>
    <scope>NUCLEOTIDE SEQUENCE [LARGE SCALE GENOMIC DNA]</scope>
    <source>
        <strain>RM1221</strain>
    </source>
</reference>
<organism>
    <name type="scientific">Campylobacter jejuni (strain RM1221)</name>
    <dbReference type="NCBI Taxonomy" id="195099"/>
    <lineage>
        <taxon>Bacteria</taxon>
        <taxon>Pseudomonadati</taxon>
        <taxon>Campylobacterota</taxon>
        <taxon>Epsilonproteobacteria</taxon>
        <taxon>Campylobacterales</taxon>
        <taxon>Campylobacteraceae</taxon>
        <taxon>Campylobacter</taxon>
    </lineage>
</organism>
<sequence>MPLIIPENIPAYELLKEHAFIMGLRRAKHQDIRPQEILIVNLMPKKIETENQILSLLANSPLQVNITLLATTSYVGKNTPFTHLEKFYKGLEEVKKHKFDGAIVTGAPVEQMDFEKVAYWEELLEIFDFLKQNVTSSMYICWGAMAALKYFYGVDKISLDKKIFGVYKHDKVSPDLLLTNLDEKVLMPHSRHSSMDEEQILALQKQGKLKILLRNKKIGSALLRDEKNIFILGHLEYFKETLHQEYVRDNFIQKAKNYYDKKGNIKYNWRSNANTIFANWLNYDVYQSTPFVL</sequence>
<evidence type="ECO:0000255" key="1">
    <source>
        <dbReference type="HAMAP-Rule" id="MF_00295"/>
    </source>
</evidence>
<name>METAA_CAMJR</name>
<accession>Q5HS71</accession>
<proteinExistence type="inferred from homology"/>
<keyword id="KW-0012">Acyltransferase</keyword>
<keyword id="KW-0028">Amino-acid biosynthesis</keyword>
<keyword id="KW-0963">Cytoplasm</keyword>
<keyword id="KW-0486">Methionine biosynthesis</keyword>
<keyword id="KW-0808">Transferase</keyword>
<gene>
    <name evidence="1" type="primary">metAA</name>
    <name type="ordered locus">CJE1894</name>
</gene>
<protein>
    <recommendedName>
        <fullName evidence="1">Homoserine O-acetyltransferase</fullName>
        <shortName evidence="1">HAT</shortName>
        <ecNumber evidence="1">2.3.1.31</ecNumber>
    </recommendedName>
    <alternativeName>
        <fullName evidence="1">Homoserine transacetylase</fullName>
        <shortName evidence="1">HTA</shortName>
    </alternativeName>
</protein>
<comment type="function">
    <text evidence="1">Transfers an acetyl group from acetyl-CoA to L-homoserine, forming acetyl-L-homoserine.</text>
</comment>
<comment type="catalytic activity">
    <reaction evidence="1">
        <text>L-homoserine + acetyl-CoA = O-acetyl-L-homoserine + CoA</text>
        <dbReference type="Rhea" id="RHEA:13701"/>
        <dbReference type="ChEBI" id="CHEBI:57287"/>
        <dbReference type="ChEBI" id="CHEBI:57288"/>
        <dbReference type="ChEBI" id="CHEBI:57476"/>
        <dbReference type="ChEBI" id="CHEBI:57716"/>
        <dbReference type="EC" id="2.3.1.31"/>
    </reaction>
</comment>
<comment type="pathway">
    <text evidence="1">Amino-acid biosynthesis; L-methionine biosynthesis via de novo pathway; O-acetyl-L-homoserine from L-homoserine: step 1/1.</text>
</comment>
<comment type="subcellular location">
    <subcellularLocation>
        <location evidence="1">Cytoplasm</location>
    </subcellularLocation>
</comment>
<comment type="similarity">
    <text evidence="1">Belongs to the MetA family.</text>
</comment>
<dbReference type="EC" id="2.3.1.31" evidence="1"/>
<dbReference type="EMBL" id="CP000025">
    <property type="protein sequence ID" value="AAW34494.1"/>
    <property type="molecule type" value="Genomic_DNA"/>
</dbReference>
<dbReference type="RefSeq" id="WP_002783526.1">
    <property type="nucleotide sequence ID" value="NC_003912.7"/>
</dbReference>
<dbReference type="SMR" id="Q5HS71"/>
<dbReference type="DNASU" id="3230653"/>
<dbReference type="KEGG" id="cjr:CJE1894"/>
<dbReference type="HOGENOM" id="CLU_057851_0_1_7"/>
<dbReference type="UniPathway" id="UPA00051">
    <property type="reaction ID" value="UER00074"/>
</dbReference>
<dbReference type="GO" id="GO:0005737">
    <property type="term" value="C:cytoplasm"/>
    <property type="evidence" value="ECO:0007669"/>
    <property type="project" value="UniProtKB-SubCell"/>
</dbReference>
<dbReference type="GO" id="GO:0004414">
    <property type="term" value="F:homoserine O-acetyltransferase activity"/>
    <property type="evidence" value="ECO:0007669"/>
    <property type="project" value="UniProtKB-EC"/>
</dbReference>
<dbReference type="GO" id="GO:0008899">
    <property type="term" value="F:homoserine O-succinyltransferase activity"/>
    <property type="evidence" value="ECO:0007669"/>
    <property type="project" value="UniProtKB-UniRule"/>
</dbReference>
<dbReference type="GO" id="GO:0019281">
    <property type="term" value="P:L-methionine biosynthetic process from homoserine via O-succinyl-L-homoserine and cystathionine"/>
    <property type="evidence" value="ECO:0007669"/>
    <property type="project" value="InterPro"/>
</dbReference>
<dbReference type="CDD" id="cd03131">
    <property type="entry name" value="GATase1_HTS"/>
    <property type="match status" value="1"/>
</dbReference>
<dbReference type="Gene3D" id="3.40.50.880">
    <property type="match status" value="1"/>
</dbReference>
<dbReference type="HAMAP" id="MF_00295">
    <property type="entry name" value="MetA_acyltransf"/>
    <property type="match status" value="1"/>
</dbReference>
<dbReference type="InterPro" id="IPR029062">
    <property type="entry name" value="Class_I_gatase-like"/>
</dbReference>
<dbReference type="InterPro" id="IPR005697">
    <property type="entry name" value="HST_MetA"/>
</dbReference>
<dbReference type="InterPro" id="IPR033752">
    <property type="entry name" value="MetA_family"/>
</dbReference>
<dbReference type="NCBIfam" id="TIGR01001">
    <property type="entry name" value="metA"/>
    <property type="match status" value="1"/>
</dbReference>
<dbReference type="PANTHER" id="PTHR20919">
    <property type="entry name" value="HOMOSERINE O-SUCCINYLTRANSFERASE"/>
    <property type="match status" value="1"/>
</dbReference>
<dbReference type="PANTHER" id="PTHR20919:SF0">
    <property type="entry name" value="HOMOSERINE O-SUCCINYLTRANSFERASE"/>
    <property type="match status" value="1"/>
</dbReference>
<dbReference type="Pfam" id="PF04204">
    <property type="entry name" value="HTS"/>
    <property type="match status" value="1"/>
</dbReference>
<dbReference type="PIRSF" id="PIRSF000450">
    <property type="entry name" value="H_ser_succinyltr"/>
    <property type="match status" value="1"/>
</dbReference>
<dbReference type="SUPFAM" id="SSF52317">
    <property type="entry name" value="Class I glutamine amidotransferase-like"/>
    <property type="match status" value="1"/>
</dbReference>